<name>RT4I1_CAEEL</name>
<reference evidence="10" key="1">
    <citation type="journal article" date="1998" name="Science">
        <title>Genome sequence of the nematode C. elegans: a platform for investigating biology.</title>
        <authorList>
            <consortium name="The C. elegans sequencing consortium"/>
        </authorList>
    </citation>
    <scope>NUCLEOTIDE SEQUENCE [LARGE SCALE GENOMIC DNA]</scope>
    <source>
        <strain evidence="10">Bristol N2</strain>
    </source>
</reference>
<reference evidence="9" key="2">
    <citation type="journal article" date="1982" name="Genetics">
        <title>Radiation-sensitive mutants of Caenorhabditis elegans.</title>
        <authorList>
            <person name="Hartman P.S."/>
            <person name="Herman R.K."/>
        </authorList>
    </citation>
    <scope>FUNCTION</scope>
    <scope>DISRUPTION PHENOTYPE</scope>
</reference>
<reference evidence="9" key="3">
    <citation type="journal article" date="1993" name="Mech. Ageing Dev.">
        <title>The radiation-sensitive mutant rad-8 of Caenorhabditis elegans is hypersensitive to the effects of oxygen on aging and development.</title>
        <authorList>
            <person name="Ishi N."/>
            <person name="Suzuki N."/>
            <person name="Hartman P.S."/>
            <person name="Suzuki K."/>
        </authorList>
    </citation>
    <scope>FUNCTION</scope>
    <scope>DISRUPTION PHENOTYPE</scope>
</reference>
<reference evidence="9" key="4">
    <citation type="journal article" date="1994" name="J. Gerontol.">
        <title>The effects of temperature on the longevity of a radiation-sensitive mutant rad-8 of the nematode Caenorhabditis elegans.</title>
        <authorList>
            <person name="Ishii N."/>
            <person name="Suzuki N."/>
            <person name="Hartman P.S."/>
            <person name="Suzuki K."/>
        </authorList>
    </citation>
    <scope>FUNCTION</scope>
    <scope>DISRUPTION PHENOTYPE</scope>
</reference>
<reference evidence="9" key="5">
    <citation type="journal article" date="1999" name="Cell">
        <title>Molecular mechanisms of bacterial virulence elucidated using a Pseudomonas aeruginosa-Caenorhabditis elegans pathogenesis model.</title>
        <authorList>
            <person name="Mahajan-Miklos S."/>
            <person name="Tan M.-W."/>
            <person name="Rahme L.G."/>
            <person name="Ausubel F.M."/>
        </authorList>
    </citation>
    <scope>FUNCTION</scope>
    <scope>DISRUPTION PHENOTYPE</scope>
</reference>
<reference evidence="9" key="6">
    <citation type="journal article" date="2011" name="Genes Cells">
        <title>A mutation in a mitochondrial dehydrogenase/reductase gene causes an increased sensitivity to oxidative stress and mitochondrial defects in the nematode Caenorhabditis elegans.</title>
        <authorList>
            <person name="Fujii M."/>
            <person name="Yasuda K."/>
            <person name="Hartman P.S."/>
            <person name="Ayusawa D."/>
            <person name="Ishii N."/>
        </authorList>
    </citation>
    <scope>FUNCTION</scope>
    <scope>SUBCELLULAR LOCATION</scope>
    <scope>TISSUE SPECIFICITY</scope>
    <scope>DISRUPTION PHENOTYPE</scope>
</reference>
<keyword id="KW-0496">Mitochondrion</keyword>
<keyword id="KW-0560">Oxidoreductase</keyword>
<keyword id="KW-1185">Reference proteome</keyword>
<keyword id="KW-0346">Stress response</keyword>
<keyword id="KW-0809">Transit peptide</keyword>
<sequence length="366" mass="40111">MIEKMILRRFFSTKSSTMRAWVSENGSGVELKEVPLPVINKPGQVLLKVKAASVNPIDVDMSQGYGREFLGTWKKIESCDAAASRFPLIPGRDCTAVVESVGGDVHNLAPGDEVMAVVPVILPGTHAEFVVTDSKYCSKKPSNLSFVSAAALPYVASTAYSAFTIARVSQRNAKQQRVLIHGGAGGVGSMAIQLLKAWGCEKIVATCAKGSFDIVKQLGAIPVDYTSDQATQELIEHAPFEVILDTVDSQLAKWSDNVMGVWRNCVHVSIVSPLMREMDKNGVPLGLVTTAMKHFERSFQSHLRGRWFSYAFFRPSSDLMSQLSRFAEDGKIVPVVEQVMGFEELEKAYEKVSQLNGRGKTVIKYD</sequence>
<comment type="function">
    <text evidence="3 4 5 6 7">Plays a role in oxygen metabolism in the mitochondria by regulating the levels of reactive oxygen species (ROS) thereby conferring resistance to oxidative stress (PubMed:21895890, PubMed:7152245, PubMed:8169328, PubMed:8350650). Involved in resistance to P.aeruginosa PA14 infection (PubMed:9989496). Regulates lifespan (PubMed:8169328).</text>
</comment>
<comment type="subcellular location">
    <subcellularLocation>
        <location evidence="3">Mitochondrion</location>
    </subcellularLocation>
</comment>
<comment type="tissue specificity">
    <text evidence="3">Expressed in pharynx, muscles and intestine.</text>
</comment>
<comment type="disruption phenotype">
    <text evidence="3 4 5 6 7">Under hyperoxic conditions or low temperature (16 degrees Celsius), lifespan, body size and fertility are severely reduced and sexual maturity and egg hatching are delayed (PubMed:8169328, PubMed:8350650). Slight increase in the number of apoptotic cells at the embryonic comma stage (PubMed:21895890). Also shows strong susceptibility to UV irradiation and paraquat treatment. Does not show increased sensitivity to X-ray radiation (PubMed:7152245, PubMed:8350650). Increased sensitivity to P.aeruginosa PA14-mediated killing (PubMed:9989496). Body wall muscle mitochondria appear enlarged and abnormal with less developed cristae in hypoxic or hyperoxic conditions (PubMed:21895890).</text>
</comment>
<comment type="similarity">
    <text evidence="9">Belongs to the zinc-containing alcohol dehydrogenase family. Quinone oxidoreductase subfamily.</text>
</comment>
<feature type="transit peptide" description="Mitochondrion" evidence="2">
    <location>
        <begin position="1"/>
        <end position="20"/>
    </location>
</feature>
<feature type="chain" id="PRO_0000436534" description="Reticulon-4-interacting protein 1, mitochondrial" evidence="9">
    <location>
        <begin position="21"/>
        <end position="366"/>
    </location>
</feature>
<organism evidence="10">
    <name type="scientific">Caenorhabditis elegans</name>
    <dbReference type="NCBI Taxonomy" id="6239"/>
    <lineage>
        <taxon>Eukaryota</taxon>
        <taxon>Metazoa</taxon>
        <taxon>Ecdysozoa</taxon>
        <taxon>Nematoda</taxon>
        <taxon>Chromadorea</taxon>
        <taxon>Rhabditida</taxon>
        <taxon>Rhabditina</taxon>
        <taxon>Rhabditomorpha</taxon>
        <taxon>Rhabditoidea</taxon>
        <taxon>Rhabditidae</taxon>
        <taxon>Peloderinae</taxon>
        <taxon>Caenorhabditis</taxon>
    </lineage>
</organism>
<evidence type="ECO:0000250" key="1">
    <source>
        <dbReference type="UniProtKB" id="Q8WWV3"/>
    </source>
</evidence>
<evidence type="ECO:0000255" key="2"/>
<evidence type="ECO:0000269" key="3">
    <source>
    </source>
</evidence>
<evidence type="ECO:0000269" key="4">
    <source>
    </source>
</evidence>
<evidence type="ECO:0000269" key="5">
    <source>
    </source>
</evidence>
<evidence type="ECO:0000269" key="6">
    <source>
    </source>
</evidence>
<evidence type="ECO:0000269" key="7">
    <source>
    </source>
</evidence>
<evidence type="ECO:0000303" key="8">
    <source>
    </source>
</evidence>
<evidence type="ECO:0000305" key="9"/>
<evidence type="ECO:0000312" key="10">
    <source>
        <dbReference type="Proteomes" id="UP000001940"/>
    </source>
</evidence>
<evidence type="ECO:0000312" key="11">
    <source>
        <dbReference type="WormBase" id="F56H1.6"/>
    </source>
</evidence>
<protein>
    <recommendedName>
        <fullName evidence="1">Reticulon-4-interacting protein 1, mitochondrial</fullName>
        <ecNumber evidence="8">1.-.-.-</ecNumber>
    </recommendedName>
</protein>
<accession>Q4W4Z2</accession>
<gene>
    <name evidence="11" type="primary">rad-8</name>
    <name evidence="11" type="ORF">F56H1.6</name>
</gene>
<proteinExistence type="evidence at transcript level"/>
<dbReference type="EC" id="1.-.-.-" evidence="8"/>
<dbReference type="EMBL" id="BX284601">
    <property type="protein sequence ID" value="CCD62972.1"/>
    <property type="molecule type" value="Genomic_DNA"/>
</dbReference>
<dbReference type="RefSeq" id="NP_001021512.2">
    <property type="nucleotide sequence ID" value="NM_001026341.4"/>
</dbReference>
<dbReference type="SMR" id="Q4W4Z2"/>
<dbReference type="FunCoup" id="Q4W4Z2">
    <property type="interactions" value="2223"/>
</dbReference>
<dbReference type="STRING" id="6239.F56H1.6.1"/>
<dbReference type="PaxDb" id="6239-F56H1.6"/>
<dbReference type="PeptideAtlas" id="Q4W4Z2"/>
<dbReference type="EnsemblMetazoa" id="F56H1.6.1">
    <property type="protein sequence ID" value="F56H1.6.1"/>
    <property type="gene ID" value="WBGene00044305"/>
</dbReference>
<dbReference type="GeneID" id="3565366"/>
<dbReference type="KEGG" id="cel:CELE_F56H1.6"/>
<dbReference type="UCSC" id="F56H1.6">
    <property type="organism name" value="c. elegans"/>
</dbReference>
<dbReference type="AGR" id="WB:WBGene00044305"/>
<dbReference type="CTD" id="3565366"/>
<dbReference type="WormBase" id="F56H1.6">
    <property type="protein sequence ID" value="CE45632"/>
    <property type="gene ID" value="WBGene00044305"/>
    <property type="gene designation" value="rad-8"/>
</dbReference>
<dbReference type="eggNOG" id="KOG1198">
    <property type="taxonomic scope" value="Eukaryota"/>
</dbReference>
<dbReference type="GeneTree" id="ENSGT00880000138028"/>
<dbReference type="HOGENOM" id="CLU_026673_3_3_1"/>
<dbReference type="InParanoid" id="Q4W4Z2"/>
<dbReference type="OMA" id="PVVPGWD"/>
<dbReference type="OrthoDB" id="48317at2759"/>
<dbReference type="PhylomeDB" id="Q4W4Z2"/>
<dbReference type="PRO" id="PR:Q4W4Z2"/>
<dbReference type="Proteomes" id="UP000001940">
    <property type="component" value="Chromosome I"/>
</dbReference>
<dbReference type="Bgee" id="WBGene00044305">
    <property type="expression patterns" value="Expressed in adult organism and 3 other cell types or tissues"/>
</dbReference>
<dbReference type="GO" id="GO:0005759">
    <property type="term" value="C:mitochondrial matrix"/>
    <property type="evidence" value="ECO:0000250"/>
    <property type="project" value="WormBase"/>
</dbReference>
<dbReference type="GO" id="GO:0005739">
    <property type="term" value="C:mitochondrion"/>
    <property type="evidence" value="ECO:0000314"/>
    <property type="project" value="WormBase"/>
</dbReference>
<dbReference type="GO" id="GO:0008753">
    <property type="term" value="F:NADPH dehydrogenase (quinone) activity"/>
    <property type="evidence" value="ECO:0000250"/>
    <property type="project" value="WormBase"/>
</dbReference>
<dbReference type="GO" id="GO:0050829">
    <property type="term" value="P:defense response to Gram-negative bacterium"/>
    <property type="evidence" value="ECO:0000315"/>
    <property type="project" value="WormBase"/>
</dbReference>
<dbReference type="GO" id="GO:0009792">
    <property type="term" value="P:embryo development ending in birth or egg hatching"/>
    <property type="evidence" value="ECO:0000315"/>
    <property type="project" value="WormBase"/>
</dbReference>
<dbReference type="GO" id="GO:0045087">
    <property type="term" value="P:innate immune response"/>
    <property type="evidence" value="ECO:0000315"/>
    <property type="project" value="WormBase"/>
</dbReference>
<dbReference type="GO" id="GO:0040010">
    <property type="term" value="P:positive regulation of growth rate"/>
    <property type="evidence" value="ECO:0000315"/>
    <property type="project" value="WormBase"/>
</dbReference>
<dbReference type="GO" id="GO:0040014">
    <property type="term" value="P:regulation of multicellular organism growth"/>
    <property type="evidence" value="ECO:0000315"/>
    <property type="project" value="WormBase"/>
</dbReference>
<dbReference type="GO" id="GO:0006979">
    <property type="term" value="P:response to oxidative stress"/>
    <property type="evidence" value="ECO:0000315"/>
    <property type="project" value="WormBase"/>
</dbReference>
<dbReference type="GO" id="GO:0070482">
    <property type="term" value="P:response to oxygen levels"/>
    <property type="evidence" value="ECO:0000315"/>
    <property type="project" value="WormBase"/>
</dbReference>
<dbReference type="GO" id="GO:0000303">
    <property type="term" value="P:response to superoxide"/>
    <property type="evidence" value="ECO:0000315"/>
    <property type="project" value="WormBase"/>
</dbReference>
<dbReference type="GO" id="GO:0009411">
    <property type="term" value="P:response to UV"/>
    <property type="evidence" value="ECO:0000315"/>
    <property type="project" value="WormBase"/>
</dbReference>
<dbReference type="GO" id="GO:0006744">
    <property type="term" value="P:ubiquinone biosynthetic process"/>
    <property type="evidence" value="ECO:0000250"/>
    <property type="project" value="WormBase"/>
</dbReference>
<dbReference type="CDD" id="cd08248">
    <property type="entry name" value="RTN4I1"/>
    <property type="match status" value="1"/>
</dbReference>
<dbReference type="FunFam" id="3.40.50.720:FF:000147">
    <property type="entry name" value="Reticulon-4-interacting protein 1 homolog, mitochondrial"/>
    <property type="match status" value="1"/>
</dbReference>
<dbReference type="FunFam" id="3.90.180.10:FF:000082">
    <property type="entry name" value="Reticulon-4-interacting protein 1, mitochondrial"/>
    <property type="match status" value="1"/>
</dbReference>
<dbReference type="Gene3D" id="3.90.180.10">
    <property type="entry name" value="Medium-chain alcohol dehydrogenases, catalytic domain"/>
    <property type="match status" value="1"/>
</dbReference>
<dbReference type="Gene3D" id="3.40.50.720">
    <property type="entry name" value="NAD(P)-binding Rossmann-like Domain"/>
    <property type="match status" value="1"/>
</dbReference>
<dbReference type="InterPro" id="IPR013154">
    <property type="entry name" value="ADH-like_N"/>
</dbReference>
<dbReference type="InterPro" id="IPR011032">
    <property type="entry name" value="GroES-like_sf"/>
</dbReference>
<dbReference type="InterPro" id="IPR036291">
    <property type="entry name" value="NAD(P)-bd_dom_sf"/>
</dbReference>
<dbReference type="InterPro" id="IPR020843">
    <property type="entry name" value="PKS_ER"/>
</dbReference>
<dbReference type="InterPro" id="IPR037397">
    <property type="entry name" value="RTN4I1"/>
</dbReference>
<dbReference type="InterPro" id="IPR050700">
    <property type="entry name" value="YIM1/Zinc_Alcohol_DH_Fams"/>
</dbReference>
<dbReference type="PANTHER" id="PTHR11695">
    <property type="entry name" value="ALCOHOL DEHYDROGENASE RELATED"/>
    <property type="match status" value="1"/>
</dbReference>
<dbReference type="PANTHER" id="PTHR11695:SF294">
    <property type="entry name" value="RETICULON-4-INTERACTING PROTEIN 1, MITOCHONDRIAL"/>
    <property type="match status" value="1"/>
</dbReference>
<dbReference type="Pfam" id="PF08240">
    <property type="entry name" value="ADH_N"/>
    <property type="match status" value="1"/>
</dbReference>
<dbReference type="Pfam" id="PF13602">
    <property type="entry name" value="ADH_zinc_N_2"/>
    <property type="match status" value="1"/>
</dbReference>
<dbReference type="SMART" id="SM00829">
    <property type="entry name" value="PKS_ER"/>
    <property type="match status" value="1"/>
</dbReference>
<dbReference type="SUPFAM" id="SSF50129">
    <property type="entry name" value="GroES-like"/>
    <property type="match status" value="1"/>
</dbReference>
<dbReference type="SUPFAM" id="SSF51735">
    <property type="entry name" value="NAD(P)-binding Rossmann-fold domains"/>
    <property type="match status" value="1"/>
</dbReference>